<name>MDH_BACTN</name>
<protein>
    <recommendedName>
        <fullName evidence="1">Malate dehydrogenase</fullName>
        <ecNumber evidence="1">1.1.1.37</ecNumber>
    </recommendedName>
</protein>
<evidence type="ECO:0000255" key="1">
    <source>
        <dbReference type="HAMAP-Rule" id="MF_00487"/>
    </source>
</evidence>
<accession>Q8A0W0</accession>
<keyword id="KW-0520">NAD</keyword>
<keyword id="KW-0560">Oxidoreductase</keyword>
<keyword id="KW-1185">Reference proteome</keyword>
<keyword id="KW-0816">Tricarboxylic acid cycle</keyword>
<feature type="chain" id="PRO_0000113436" description="Malate dehydrogenase">
    <location>
        <begin position="1"/>
        <end position="313"/>
    </location>
</feature>
<feature type="active site" description="Proton acceptor" evidence="1">
    <location>
        <position position="176"/>
    </location>
</feature>
<feature type="binding site" evidence="1">
    <location>
        <begin position="8"/>
        <end position="13"/>
    </location>
    <ligand>
        <name>NAD(+)</name>
        <dbReference type="ChEBI" id="CHEBI:57540"/>
    </ligand>
</feature>
<feature type="binding site" evidence="1">
    <location>
        <position position="33"/>
    </location>
    <ligand>
        <name>NAD(+)</name>
        <dbReference type="ChEBI" id="CHEBI:57540"/>
    </ligand>
</feature>
<feature type="binding site" evidence="1">
    <location>
        <position position="83"/>
    </location>
    <ligand>
        <name>substrate</name>
    </ligand>
</feature>
<feature type="binding site" evidence="1">
    <location>
        <position position="89"/>
    </location>
    <ligand>
        <name>substrate</name>
    </ligand>
</feature>
<feature type="binding site" evidence="1">
    <location>
        <position position="96"/>
    </location>
    <ligand>
        <name>NAD(+)</name>
        <dbReference type="ChEBI" id="CHEBI:57540"/>
    </ligand>
</feature>
<feature type="binding site" evidence="1">
    <location>
        <begin position="119"/>
        <end position="121"/>
    </location>
    <ligand>
        <name>NAD(+)</name>
        <dbReference type="ChEBI" id="CHEBI:57540"/>
    </ligand>
</feature>
<feature type="binding site" evidence="1">
    <location>
        <position position="121"/>
    </location>
    <ligand>
        <name>substrate</name>
    </ligand>
</feature>
<feature type="binding site" evidence="1">
    <location>
        <position position="152"/>
    </location>
    <ligand>
        <name>substrate</name>
    </ligand>
</feature>
<reference key="1">
    <citation type="journal article" date="2003" name="Science">
        <title>A genomic view of the human-Bacteroides thetaiotaomicron symbiosis.</title>
        <authorList>
            <person name="Xu J."/>
            <person name="Bjursell M.K."/>
            <person name="Himrod J."/>
            <person name="Deng S."/>
            <person name="Carmichael L.K."/>
            <person name="Chiang H.C."/>
            <person name="Hooper L.V."/>
            <person name="Gordon J.I."/>
        </authorList>
    </citation>
    <scope>NUCLEOTIDE SEQUENCE [LARGE SCALE GENOMIC DNA]</scope>
    <source>
        <strain>ATCC 29148 / DSM 2079 / JCM 5827 / CCUG 10774 / NCTC 10582 / VPI-5482 / E50</strain>
    </source>
</reference>
<dbReference type="EC" id="1.1.1.37" evidence="1"/>
<dbReference type="EMBL" id="AE015928">
    <property type="protein sequence ID" value="AAO79016.1"/>
    <property type="molecule type" value="Genomic_DNA"/>
</dbReference>
<dbReference type="RefSeq" id="NP_812822.1">
    <property type="nucleotide sequence ID" value="NC_004663.1"/>
</dbReference>
<dbReference type="RefSeq" id="WP_008760830.1">
    <property type="nucleotide sequence ID" value="NZ_UYXG01000011.1"/>
</dbReference>
<dbReference type="SMR" id="Q8A0W0"/>
<dbReference type="FunCoup" id="Q8A0W0">
    <property type="interactions" value="488"/>
</dbReference>
<dbReference type="STRING" id="226186.BT_3911"/>
<dbReference type="PaxDb" id="226186-BT_3911"/>
<dbReference type="EnsemblBacteria" id="AAO79016">
    <property type="protein sequence ID" value="AAO79016"/>
    <property type="gene ID" value="BT_3911"/>
</dbReference>
<dbReference type="GeneID" id="69588680"/>
<dbReference type="KEGG" id="bth:BT_3911"/>
<dbReference type="PATRIC" id="fig|226186.12.peg.3976"/>
<dbReference type="eggNOG" id="COG0039">
    <property type="taxonomic scope" value="Bacteria"/>
</dbReference>
<dbReference type="HOGENOM" id="CLU_045401_2_1_10"/>
<dbReference type="InParanoid" id="Q8A0W0"/>
<dbReference type="OrthoDB" id="9802969at2"/>
<dbReference type="Proteomes" id="UP000001414">
    <property type="component" value="Chromosome"/>
</dbReference>
<dbReference type="GO" id="GO:0005737">
    <property type="term" value="C:cytoplasm"/>
    <property type="evidence" value="ECO:0000318"/>
    <property type="project" value="GO_Central"/>
</dbReference>
<dbReference type="GO" id="GO:0030060">
    <property type="term" value="F:L-malate dehydrogenase (NAD+) activity"/>
    <property type="evidence" value="ECO:0000318"/>
    <property type="project" value="GO_Central"/>
</dbReference>
<dbReference type="GO" id="GO:0019752">
    <property type="term" value="P:carboxylic acid metabolic process"/>
    <property type="evidence" value="ECO:0007669"/>
    <property type="project" value="InterPro"/>
</dbReference>
<dbReference type="GO" id="GO:0006099">
    <property type="term" value="P:tricarboxylic acid cycle"/>
    <property type="evidence" value="ECO:0007669"/>
    <property type="project" value="UniProtKB-UniRule"/>
</dbReference>
<dbReference type="CDD" id="cd01339">
    <property type="entry name" value="LDH-like_MDH"/>
    <property type="match status" value="1"/>
</dbReference>
<dbReference type="FunFam" id="3.40.50.720:FF:000018">
    <property type="entry name" value="Malate dehydrogenase"/>
    <property type="match status" value="1"/>
</dbReference>
<dbReference type="FunFam" id="3.90.110.10:FF:000004">
    <property type="entry name" value="Malate dehydrogenase"/>
    <property type="match status" value="1"/>
</dbReference>
<dbReference type="Gene3D" id="3.90.110.10">
    <property type="entry name" value="Lactate dehydrogenase/glycoside hydrolase, family 4, C-terminal"/>
    <property type="match status" value="1"/>
</dbReference>
<dbReference type="Gene3D" id="3.40.50.720">
    <property type="entry name" value="NAD(P)-binding Rossmann-like Domain"/>
    <property type="match status" value="1"/>
</dbReference>
<dbReference type="HAMAP" id="MF_00487">
    <property type="entry name" value="Malate_dehydrog_3"/>
    <property type="match status" value="1"/>
</dbReference>
<dbReference type="InterPro" id="IPR001557">
    <property type="entry name" value="L-lactate/malate_DH"/>
</dbReference>
<dbReference type="InterPro" id="IPR022383">
    <property type="entry name" value="Lactate/malate_DH_C"/>
</dbReference>
<dbReference type="InterPro" id="IPR001236">
    <property type="entry name" value="Lactate/malate_DH_N"/>
</dbReference>
<dbReference type="InterPro" id="IPR015955">
    <property type="entry name" value="Lactate_DH/Glyco_Ohase_4_C"/>
</dbReference>
<dbReference type="InterPro" id="IPR011275">
    <property type="entry name" value="Malate_DH_type3"/>
</dbReference>
<dbReference type="InterPro" id="IPR036291">
    <property type="entry name" value="NAD(P)-bd_dom_sf"/>
</dbReference>
<dbReference type="NCBIfam" id="TIGR01763">
    <property type="entry name" value="MalateDH_bact"/>
    <property type="match status" value="1"/>
</dbReference>
<dbReference type="NCBIfam" id="NF004863">
    <property type="entry name" value="PRK06223.1"/>
    <property type="match status" value="1"/>
</dbReference>
<dbReference type="PANTHER" id="PTHR43128">
    <property type="entry name" value="L-2-HYDROXYCARBOXYLATE DEHYDROGENASE (NAD(P)(+))"/>
    <property type="match status" value="1"/>
</dbReference>
<dbReference type="PANTHER" id="PTHR43128:SF16">
    <property type="entry name" value="L-LACTATE DEHYDROGENASE"/>
    <property type="match status" value="1"/>
</dbReference>
<dbReference type="Pfam" id="PF02866">
    <property type="entry name" value="Ldh_1_C"/>
    <property type="match status" value="1"/>
</dbReference>
<dbReference type="Pfam" id="PF00056">
    <property type="entry name" value="Ldh_1_N"/>
    <property type="match status" value="1"/>
</dbReference>
<dbReference type="PIRSF" id="PIRSF000102">
    <property type="entry name" value="Lac_mal_DH"/>
    <property type="match status" value="1"/>
</dbReference>
<dbReference type="PRINTS" id="PR00086">
    <property type="entry name" value="LLDHDRGNASE"/>
</dbReference>
<dbReference type="SUPFAM" id="SSF56327">
    <property type="entry name" value="LDH C-terminal domain-like"/>
    <property type="match status" value="1"/>
</dbReference>
<dbReference type="SUPFAM" id="SSF51735">
    <property type="entry name" value="NAD(P)-binding Rossmann-fold domains"/>
    <property type="match status" value="1"/>
</dbReference>
<comment type="function">
    <text evidence="1">Catalyzes the reversible oxidation of malate to oxaloacetate.</text>
</comment>
<comment type="catalytic activity">
    <reaction evidence="1">
        <text>(S)-malate + NAD(+) = oxaloacetate + NADH + H(+)</text>
        <dbReference type="Rhea" id="RHEA:21432"/>
        <dbReference type="ChEBI" id="CHEBI:15378"/>
        <dbReference type="ChEBI" id="CHEBI:15589"/>
        <dbReference type="ChEBI" id="CHEBI:16452"/>
        <dbReference type="ChEBI" id="CHEBI:57540"/>
        <dbReference type="ChEBI" id="CHEBI:57945"/>
        <dbReference type="EC" id="1.1.1.37"/>
    </reaction>
</comment>
<comment type="similarity">
    <text evidence="1">Belongs to the LDH/MDH superfamily. MDH type 3 family.</text>
</comment>
<proteinExistence type="inferred from homology"/>
<gene>
    <name evidence="1" type="primary">mdh</name>
    <name type="ordered locus">BT_3911</name>
</gene>
<organism>
    <name type="scientific">Bacteroides thetaiotaomicron (strain ATCC 29148 / DSM 2079 / JCM 5827 / CCUG 10774 / NCTC 10582 / VPI-5482 / E50)</name>
    <dbReference type="NCBI Taxonomy" id="226186"/>
    <lineage>
        <taxon>Bacteria</taxon>
        <taxon>Pseudomonadati</taxon>
        <taxon>Bacteroidota</taxon>
        <taxon>Bacteroidia</taxon>
        <taxon>Bacteroidales</taxon>
        <taxon>Bacteroidaceae</taxon>
        <taxon>Bacteroides</taxon>
    </lineage>
</organism>
<sequence length="313" mass="32763">MSKVTVVGAGNVGATCANVLAFNEVADEVVMLDVKEGVSEGKAMDMMQTAQLLGFDTTVVGCTNDYAQTANSDVVVITSGIPRKPGMTREELIGVNAGIVKSVAENILKYSPNAILVVISNPMDTMTYLSLKALGLPKNRIIGMGGALDSSRFKYFLSQALGCNANEVEGMVIGGHGDTTMIPLTRFATYKGMPVTNFISEEKLNEVAAATMVGGATLTKLLGTSAWYAPGAAGAFVVESILHDQKKMIPCSVYLEGEYGESDICIGVPVILGKNGIEKIVELDLNADEKAKFAASAKAVHGTNAALKEVGAL</sequence>